<proteinExistence type="inferred from homology"/>
<accession>Q7N7F0</accession>
<gene>
    <name evidence="1" type="primary">nqrE</name>
    <name type="ordered locus">plu1200</name>
</gene>
<feature type="chain" id="PRO_1000060204" description="Na(+)-translocating NADH-quinone reductase subunit E">
    <location>
        <begin position="1"/>
        <end position="198"/>
    </location>
</feature>
<feature type="transmembrane region" description="Helical" evidence="1">
    <location>
        <begin position="11"/>
        <end position="31"/>
    </location>
</feature>
<feature type="transmembrane region" description="Helical" evidence="1">
    <location>
        <begin position="35"/>
        <end position="55"/>
    </location>
</feature>
<feature type="transmembrane region" description="Helical" evidence="1">
    <location>
        <begin position="77"/>
        <end position="97"/>
    </location>
</feature>
<feature type="transmembrane region" description="Helical" evidence="1">
    <location>
        <begin position="109"/>
        <end position="129"/>
    </location>
</feature>
<feature type="transmembrane region" description="Helical" evidence="1">
    <location>
        <begin position="140"/>
        <end position="160"/>
    </location>
</feature>
<feature type="transmembrane region" description="Helical" evidence="1">
    <location>
        <begin position="176"/>
        <end position="196"/>
    </location>
</feature>
<protein>
    <recommendedName>
        <fullName evidence="1">Na(+)-translocating NADH-quinone reductase subunit E</fullName>
        <shortName evidence="1">Na(+)-NQR subunit E</shortName>
        <shortName evidence="1">Na(+)-translocating NQR subunit E</shortName>
        <ecNumber evidence="1">7.2.1.1</ecNumber>
    </recommendedName>
    <alternativeName>
        <fullName evidence="1">NQR complex subunit E</fullName>
    </alternativeName>
    <alternativeName>
        <fullName evidence="1">NQR-1 subunit E</fullName>
    </alternativeName>
</protein>
<comment type="function">
    <text evidence="1">NQR complex catalyzes the reduction of ubiquinone-1 to ubiquinol by two successive reactions, coupled with the transport of Na(+) ions from the cytoplasm to the periplasm. NqrA to NqrE are probably involved in the second step, the conversion of ubisemiquinone to ubiquinol.</text>
</comment>
<comment type="catalytic activity">
    <reaction evidence="1">
        <text>a ubiquinone + n Na(+)(in) + NADH + H(+) = a ubiquinol + n Na(+)(out) + NAD(+)</text>
        <dbReference type="Rhea" id="RHEA:47748"/>
        <dbReference type="Rhea" id="RHEA-COMP:9565"/>
        <dbReference type="Rhea" id="RHEA-COMP:9566"/>
        <dbReference type="ChEBI" id="CHEBI:15378"/>
        <dbReference type="ChEBI" id="CHEBI:16389"/>
        <dbReference type="ChEBI" id="CHEBI:17976"/>
        <dbReference type="ChEBI" id="CHEBI:29101"/>
        <dbReference type="ChEBI" id="CHEBI:57540"/>
        <dbReference type="ChEBI" id="CHEBI:57945"/>
        <dbReference type="EC" id="7.2.1.1"/>
    </reaction>
</comment>
<comment type="subunit">
    <text evidence="1">Composed of six subunits; NqrA, NqrB, NqrC, NqrD, NqrE and NqrF.</text>
</comment>
<comment type="subcellular location">
    <subcellularLocation>
        <location evidence="1">Cell inner membrane</location>
        <topology evidence="1">Multi-pass membrane protein</topology>
    </subcellularLocation>
</comment>
<comment type="similarity">
    <text evidence="1">Belongs to the NqrDE/RnfAE family.</text>
</comment>
<reference key="1">
    <citation type="journal article" date="2003" name="Nat. Biotechnol.">
        <title>The genome sequence of the entomopathogenic bacterium Photorhabdus luminescens.</title>
        <authorList>
            <person name="Duchaud E."/>
            <person name="Rusniok C."/>
            <person name="Frangeul L."/>
            <person name="Buchrieser C."/>
            <person name="Givaudan A."/>
            <person name="Taourit S."/>
            <person name="Bocs S."/>
            <person name="Boursaux-Eude C."/>
            <person name="Chandler M."/>
            <person name="Charles J.-F."/>
            <person name="Dassa E."/>
            <person name="Derose R."/>
            <person name="Derzelle S."/>
            <person name="Freyssinet G."/>
            <person name="Gaudriault S."/>
            <person name="Medigue C."/>
            <person name="Lanois A."/>
            <person name="Powell K."/>
            <person name="Siguier P."/>
            <person name="Vincent R."/>
            <person name="Wingate V."/>
            <person name="Zouine M."/>
            <person name="Glaser P."/>
            <person name="Boemare N."/>
            <person name="Danchin A."/>
            <person name="Kunst F."/>
        </authorList>
    </citation>
    <scope>NUCLEOTIDE SEQUENCE [LARGE SCALE GENOMIC DNA]</scope>
    <source>
        <strain>DSM 15139 / CIP 105565 / TT01</strain>
    </source>
</reference>
<name>NQRE_PHOLL</name>
<sequence>MEHFISLFVRAVFIENMALAFFLGMCTFLAVSKNVTTAFGLGIAVTVVLGISVPANNLVYNLVLRDGALVEGVDLSFLNFITFIGVIAALVQILEMILDRYFPSLYNALGIFLPLITVNCAIFGGVSFMAQRDYNFSESIVYGFGSGIGWMLAIVLLASIREKMKYADVPAGLKGLGITFVTTGLMALGFMSFSGVQL</sequence>
<organism>
    <name type="scientific">Photorhabdus laumondii subsp. laumondii (strain DSM 15139 / CIP 105565 / TT01)</name>
    <name type="common">Photorhabdus luminescens subsp. laumondii</name>
    <dbReference type="NCBI Taxonomy" id="243265"/>
    <lineage>
        <taxon>Bacteria</taxon>
        <taxon>Pseudomonadati</taxon>
        <taxon>Pseudomonadota</taxon>
        <taxon>Gammaproteobacteria</taxon>
        <taxon>Enterobacterales</taxon>
        <taxon>Morganellaceae</taxon>
        <taxon>Photorhabdus</taxon>
    </lineage>
</organism>
<keyword id="KW-0997">Cell inner membrane</keyword>
<keyword id="KW-1003">Cell membrane</keyword>
<keyword id="KW-0406">Ion transport</keyword>
<keyword id="KW-0472">Membrane</keyword>
<keyword id="KW-0520">NAD</keyword>
<keyword id="KW-1185">Reference proteome</keyword>
<keyword id="KW-0915">Sodium</keyword>
<keyword id="KW-0739">Sodium transport</keyword>
<keyword id="KW-1278">Translocase</keyword>
<keyword id="KW-0812">Transmembrane</keyword>
<keyword id="KW-1133">Transmembrane helix</keyword>
<keyword id="KW-0813">Transport</keyword>
<keyword id="KW-0830">Ubiquinone</keyword>
<dbReference type="EC" id="7.2.1.1" evidence="1"/>
<dbReference type="EMBL" id="BX571862">
    <property type="protein sequence ID" value="CAE13494.1"/>
    <property type="molecule type" value="Genomic_DNA"/>
</dbReference>
<dbReference type="RefSeq" id="WP_011145527.1">
    <property type="nucleotide sequence ID" value="NC_005126.1"/>
</dbReference>
<dbReference type="SMR" id="Q7N7F0"/>
<dbReference type="STRING" id="243265.plu1200"/>
<dbReference type="GeneID" id="45656137"/>
<dbReference type="GeneID" id="48847470"/>
<dbReference type="KEGG" id="plu:plu1200"/>
<dbReference type="eggNOG" id="COG2209">
    <property type="taxonomic scope" value="Bacteria"/>
</dbReference>
<dbReference type="HOGENOM" id="CLU_095255_0_0_6"/>
<dbReference type="OrthoDB" id="9803631at2"/>
<dbReference type="Proteomes" id="UP000002514">
    <property type="component" value="Chromosome"/>
</dbReference>
<dbReference type="GO" id="GO:0009276">
    <property type="term" value="C:Gram-negative-bacterium-type cell wall"/>
    <property type="evidence" value="ECO:0007669"/>
    <property type="project" value="InterPro"/>
</dbReference>
<dbReference type="GO" id="GO:0005886">
    <property type="term" value="C:plasma membrane"/>
    <property type="evidence" value="ECO:0007669"/>
    <property type="project" value="UniProtKB-SubCell"/>
</dbReference>
<dbReference type="GO" id="GO:0016655">
    <property type="term" value="F:oxidoreductase activity, acting on NAD(P)H, quinone or similar compound as acceptor"/>
    <property type="evidence" value="ECO:0007669"/>
    <property type="project" value="UniProtKB-UniRule"/>
</dbReference>
<dbReference type="GO" id="GO:0022904">
    <property type="term" value="P:respiratory electron transport chain"/>
    <property type="evidence" value="ECO:0007669"/>
    <property type="project" value="InterPro"/>
</dbReference>
<dbReference type="GO" id="GO:0006814">
    <property type="term" value="P:sodium ion transport"/>
    <property type="evidence" value="ECO:0007669"/>
    <property type="project" value="UniProtKB-UniRule"/>
</dbReference>
<dbReference type="HAMAP" id="MF_00429">
    <property type="entry name" value="NqrE"/>
    <property type="match status" value="1"/>
</dbReference>
<dbReference type="InterPro" id="IPR003667">
    <property type="entry name" value="NqrDE/RnfAE"/>
</dbReference>
<dbReference type="InterPro" id="IPR050133">
    <property type="entry name" value="NqrDE/RnfAE_oxidrdctase"/>
</dbReference>
<dbReference type="InterPro" id="IPR010967">
    <property type="entry name" value="NqrE"/>
</dbReference>
<dbReference type="NCBIfam" id="TIGR01940">
    <property type="entry name" value="nqrE"/>
    <property type="match status" value="1"/>
</dbReference>
<dbReference type="PANTHER" id="PTHR30335">
    <property type="entry name" value="INTEGRAL MEMBRANE PROTEIN OF SOXR-REDUCING COMPLEX"/>
    <property type="match status" value="1"/>
</dbReference>
<dbReference type="PANTHER" id="PTHR30335:SF1">
    <property type="entry name" value="NA(+)-TRANSLOCATING NADH-QUINONE REDUCTASE SUBUNIT E"/>
    <property type="match status" value="1"/>
</dbReference>
<dbReference type="Pfam" id="PF02508">
    <property type="entry name" value="Rnf-Nqr"/>
    <property type="match status" value="1"/>
</dbReference>
<dbReference type="PIRSF" id="PIRSF006102">
    <property type="entry name" value="NQR_DE"/>
    <property type="match status" value="1"/>
</dbReference>
<evidence type="ECO:0000255" key="1">
    <source>
        <dbReference type="HAMAP-Rule" id="MF_00429"/>
    </source>
</evidence>